<sequence>MRVLVLGSGVIGTTSAYYLARAGFQVTVVDRQPAAAMETSFANAGQVSPGYASPWAAPGVPLKALKWLLQRHAPLAIKATADIDQYLWMAQMLRNCTASRYAINKERMVRLSEYSRDCLDELRLETGIAYEGRSLGTTQLFRTQAQLDNAAKDIAVLEQSGVPYELLDRDGIARVEPALAGVTGILSGALRLPNDQTGDCQLFTTRLAEMAVALGVEFRYGQNIERLDHAGDRINGVWIDGKLETADRYVLALGSYSPQLLKPLGIKAPVYPLKGYSLTVPITNPDMAPTSTILDETYKVAITRFDNRIRVGGMAEIAGFDLSLNPRRRETLEMIVGDLYPQGGDLTQADFWTGLRPTTPDGTPIVGATPFRNLFLNTGHGTLGWTMACGSGRLLADLIARKTPRISAEGLDISRYGNTQENAQHVHPAPAHQ</sequence>
<gene>
    <name evidence="1" type="primary">dadA</name>
    <name type="ordered locus">Psyr_0235</name>
</gene>
<proteinExistence type="inferred from homology"/>
<keyword id="KW-0274">FAD</keyword>
<keyword id="KW-0285">Flavoprotein</keyword>
<keyword id="KW-0560">Oxidoreductase</keyword>
<organism>
    <name type="scientific">Pseudomonas syringae pv. syringae (strain B728a)</name>
    <dbReference type="NCBI Taxonomy" id="205918"/>
    <lineage>
        <taxon>Bacteria</taxon>
        <taxon>Pseudomonadati</taxon>
        <taxon>Pseudomonadota</taxon>
        <taxon>Gammaproteobacteria</taxon>
        <taxon>Pseudomonadales</taxon>
        <taxon>Pseudomonadaceae</taxon>
        <taxon>Pseudomonas</taxon>
        <taxon>Pseudomonas syringae</taxon>
    </lineage>
</organism>
<name>DADA_PSEU2</name>
<reference key="1">
    <citation type="journal article" date="2005" name="Proc. Natl. Acad. Sci. U.S.A.">
        <title>Comparison of the complete genome sequences of Pseudomonas syringae pv. syringae B728a and pv. tomato DC3000.</title>
        <authorList>
            <person name="Feil H."/>
            <person name="Feil W.S."/>
            <person name="Chain P."/>
            <person name="Larimer F."/>
            <person name="Dibartolo G."/>
            <person name="Copeland A."/>
            <person name="Lykidis A."/>
            <person name="Trong S."/>
            <person name="Nolan M."/>
            <person name="Goltsman E."/>
            <person name="Thiel J."/>
            <person name="Malfatti S."/>
            <person name="Loper J.E."/>
            <person name="Lapidus A."/>
            <person name="Detter J.C."/>
            <person name="Land M."/>
            <person name="Richardson P.M."/>
            <person name="Kyrpides N.C."/>
            <person name="Ivanova N."/>
            <person name="Lindow S.E."/>
        </authorList>
    </citation>
    <scope>NUCLEOTIDE SEQUENCE [LARGE SCALE GENOMIC DNA]</scope>
    <source>
        <strain>B728a</strain>
    </source>
</reference>
<protein>
    <recommendedName>
        <fullName evidence="1">D-amino acid dehydrogenase</fullName>
        <ecNumber evidence="1">1.4.99.-</ecNumber>
    </recommendedName>
</protein>
<comment type="function">
    <text evidence="1">Oxidative deamination of D-amino acids.</text>
</comment>
<comment type="catalytic activity">
    <reaction evidence="1">
        <text>a D-alpha-amino acid + A + H2O = a 2-oxocarboxylate + AH2 + NH4(+)</text>
        <dbReference type="Rhea" id="RHEA:18125"/>
        <dbReference type="ChEBI" id="CHEBI:13193"/>
        <dbReference type="ChEBI" id="CHEBI:15377"/>
        <dbReference type="ChEBI" id="CHEBI:17499"/>
        <dbReference type="ChEBI" id="CHEBI:28938"/>
        <dbReference type="ChEBI" id="CHEBI:35179"/>
        <dbReference type="ChEBI" id="CHEBI:59871"/>
    </reaction>
</comment>
<comment type="cofactor">
    <cofactor evidence="1">
        <name>FAD</name>
        <dbReference type="ChEBI" id="CHEBI:57692"/>
    </cofactor>
</comment>
<comment type="pathway">
    <text>Amino-acid degradation; D-alanine degradation; NH(3) and pyruvate from D-alanine: step 1/1.</text>
</comment>
<comment type="similarity">
    <text evidence="1">Belongs to the DadA oxidoreductase family.</text>
</comment>
<evidence type="ECO:0000255" key="1">
    <source>
        <dbReference type="HAMAP-Rule" id="MF_01202"/>
    </source>
</evidence>
<accession>Q4ZZW4</accession>
<dbReference type="EC" id="1.4.99.-" evidence="1"/>
<dbReference type="EMBL" id="CP000075">
    <property type="protein sequence ID" value="AAY35308.1"/>
    <property type="molecule type" value="Genomic_DNA"/>
</dbReference>
<dbReference type="RefSeq" id="WP_003403947.1">
    <property type="nucleotide sequence ID" value="NC_007005.1"/>
</dbReference>
<dbReference type="RefSeq" id="YP_233346.1">
    <property type="nucleotide sequence ID" value="NC_007005.1"/>
</dbReference>
<dbReference type="SMR" id="Q4ZZW4"/>
<dbReference type="STRING" id="205918.Psyr_0235"/>
<dbReference type="KEGG" id="psb:Psyr_0235"/>
<dbReference type="PATRIC" id="fig|205918.7.peg.234"/>
<dbReference type="eggNOG" id="COG0665">
    <property type="taxonomic scope" value="Bacteria"/>
</dbReference>
<dbReference type="HOGENOM" id="CLU_007884_9_2_6"/>
<dbReference type="OrthoDB" id="9805337at2"/>
<dbReference type="UniPathway" id="UPA00043">
    <property type="reaction ID" value="UER00498"/>
</dbReference>
<dbReference type="Proteomes" id="UP000000426">
    <property type="component" value="Chromosome"/>
</dbReference>
<dbReference type="GO" id="GO:0005737">
    <property type="term" value="C:cytoplasm"/>
    <property type="evidence" value="ECO:0007669"/>
    <property type="project" value="TreeGrafter"/>
</dbReference>
<dbReference type="GO" id="GO:0005886">
    <property type="term" value="C:plasma membrane"/>
    <property type="evidence" value="ECO:0007669"/>
    <property type="project" value="TreeGrafter"/>
</dbReference>
<dbReference type="GO" id="GO:0008718">
    <property type="term" value="F:D-amino-acid dehydrogenase activity"/>
    <property type="evidence" value="ECO:0007669"/>
    <property type="project" value="UniProtKB-UniRule"/>
</dbReference>
<dbReference type="GO" id="GO:0055130">
    <property type="term" value="P:D-alanine catabolic process"/>
    <property type="evidence" value="ECO:0007669"/>
    <property type="project" value="UniProtKB-UniPathway"/>
</dbReference>
<dbReference type="FunFam" id="3.50.50.60:FF:000020">
    <property type="entry name" value="D-amino acid dehydrogenase"/>
    <property type="match status" value="1"/>
</dbReference>
<dbReference type="Gene3D" id="3.30.9.10">
    <property type="entry name" value="D-Amino Acid Oxidase, subunit A, domain 2"/>
    <property type="match status" value="1"/>
</dbReference>
<dbReference type="Gene3D" id="3.50.50.60">
    <property type="entry name" value="FAD/NAD(P)-binding domain"/>
    <property type="match status" value="2"/>
</dbReference>
<dbReference type="HAMAP" id="MF_01202">
    <property type="entry name" value="DadA"/>
    <property type="match status" value="1"/>
</dbReference>
<dbReference type="InterPro" id="IPR023080">
    <property type="entry name" value="DadA"/>
</dbReference>
<dbReference type="InterPro" id="IPR006076">
    <property type="entry name" value="FAD-dep_OxRdtase"/>
</dbReference>
<dbReference type="InterPro" id="IPR036188">
    <property type="entry name" value="FAD/NAD-bd_sf"/>
</dbReference>
<dbReference type="NCBIfam" id="NF001933">
    <property type="entry name" value="PRK00711.1"/>
    <property type="match status" value="1"/>
</dbReference>
<dbReference type="PANTHER" id="PTHR13847:SF280">
    <property type="entry name" value="D-AMINO ACID DEHYDROGENASE"/>
    <property type="match status" value="1"/>
</dbReference>
<dbReference type="PANTHER" id="PTHR13847">
    <property type="entry name" value="SARCOSINE DEHYDROGENASE-RELATED"/>
    <property type="match status" value="1"/>
</dbReference>
<dbReference type="Pfam" id="PF01266">
    <property type="entry name" value="DAO"/>
    <property type="match status" value="1"/>
</dbReference>
<dbReference type="SUPFAM" id="SSF54373">
    <property type="entry name" value="FAD-linked reductases, C-terminal domain"/>
    <property type="match status" value="1"/>
</dbReference>
<dbReference type="SUPFAM" id="SSF51905">
    <property type="entry name" value="FAD/NAD(P)-binding domain"/>
    <property type="match status" value="1"/>
</dbReference>
<feature type="chain" id="PRO_1000066108" description="D-amino acid dehydrogenase">
    <location>
        <begin position="1"/>
        <end position="433"/>
    </location>
</feature>
<feature type="binding site" evidence="1">
    <location>
        <begin position="3"/>
        <end position="17"/>
    </location>
    <ligand>
        <name>FAD</name>
        <dbReference type="ChEBI" id="CHEBI:57692"/>
    </ligand>
</feature>